<comment type="function">
    <text evidence="1">Involved in unsaturated fatty acids biosynthesis. Catalyzes the dehydration of short chain beta-hydroxyacyl-ACPs and long chain saturated and unsaturated beta-hydroxyacyl-ACPs.</text>
</comment>
<comment type="catalytic activity">
    <reaction evidence="1">
        <text>a (3R)-hydroxyacyl-[ACP] = a (2E)-enoyl-[ACP] + H2O</text>
        <dbReference type="Rhea" id="RHEA:13097"/>
        <dbReference type="Rhea" id="RHEA-COMP:9925"/>
        <dbReference type="Rhea" id="RHEA-COMP:9945"/>
        <dbReference type="ChEBI" id="CHEBI:15377"/>
        <dbReference type="ChEBI" id="CHEBI:78784"/>
        <dbReference type="ChEBI" id="CHEBI:78827"/>
        <dbReference type="EC" id="4.2.1.59"/>
    </reaction>
</comment>
<comment type="subcellular location">
    <subcellularLocation>
        <location evidence="1">Cytoplasm</location>
    </subcellularLocation>
</comment>
<comment type="similarity">
    <text evidence="1">Belongs to the thioester dehydratase family. FabZ subfamily.</text>
</comment>
<keyword id="KW-0002">3D-structure</keyword>
<keyword id="KW-0963">Cytoplasm</keyword>
<keyword id="KW-0441">Lipid A biosynthesis</keyword>
<keyword id="KW-0444">Lipid biosynthesis</keyword>
<keyword id="KW-0443">Lipid metabolism</keyword>
<keyword id="KW-0456">Lyase</keyword>
<accession>A1KRL1</accession>
<proteinExistence type="evidence at protein level"/>
<dbReference type="EC" id="4.2.1.59" evidence="1"/>
<dbReference type="EMBL" id="AM421808">
    <property type="protein sequence ID" value="CAM09489.1"/>
    <property type="molecule type" value="Genomic_DNA"/>
</dbReference>
<dbReference type="RefSeq" id="WP_002216259.1">
    <property type="nucleotide sequence ID" value="NC_008767.1"/>
</dbReference>
<dbReference type="PDB" id="4I83">
    <property type="method" value="X-ray"/>
    <property type="resolution" value="2.60 A"/>
    <property type="chains" value="A/B/C/D/E/F=1-149"/>
</dbReference>
<dbReference type="PDBsum" id="4I83"/>
<dbReference type="SMR" id="A1KRL1"/>
<dbReference type="KEGG" id="nmc:NMC0170"/>
<dbReference type="HOGENOM" id="CLU_078912_1_0_4"/>
<dbReference type="EvolutionaryTrace" id="A1KRL1"/>
<dbReference type="Proteomes" id="UP000002286">
    <property type="component" value="Chromosome"/>
</dbReference>
<dbReference type="GO" id="GO:0005737">
    <property type="term" value="C:cytoplasm"/>
    <property type="evidence" value="ECO:0007669"/>
    <property type="project" value="UniProtKB-SubCell"/>
</dbReference>
<dbReference type="GO" id="GO:0016020">
    <property type="term" value="C:membrane"/>
    <property type="evidence" value="ECO:0007669"/>
    <property type="project" value="GOC"/>
</dbReference>
<dbReference type="GO" id="GO:0019171">
    <property type="term" value="F:(3R)-hydroxyacyl-[acyl-carrier-protein] dehydratase activity"/>
    <property type="evidence" value="ECO:0007669"/>
    <property type="project" value="UniProtKB-EC"/>
</dbReference>
<dbReference type="GO" id="GO:0006633">
    <property type="term" value="P:fatty acid biosynthetic process"/>
    <property type="evidence" value="ECO:0007669"/>
    <property type="project" value="UniProtKB-UniRule"/>
</dbReference>
<dbReference type="GO" id="GO:0009245">
    <property type="term" value="P:lipid A biosynthetic process"/>
    <property type="evidence" value="ECO:0007669"/>
    <property type="project" value="UniProtKB-UniRule"/>
</dbReference>
<dbReference type="CDD" id="cd01288">
    <property type="entry name" value="FabZ"/>
    <property type="match status" value="1"/>
</dbReference>
<dbReference type="FunFam" id="3.10.129.10:FF:000001">
    <property type="entry name" value="3-hydroxyacyl-[acyl-carrier-protein] dehydratase FabZ"/>
    <property type="match status" value="1"/>
</dbReference>
<dbReference type="Gene3D" id="3.10.129.10">
    <property type="entry name" value="Hotdog Thioesterase"/>
    <property type="match status" value="1"/>
</dbReference>
<dbReference type="HAMAP" id="MF_00406">
    <property type="entry name" value="FabZ"/>
    <property type="match status" value="1"/>
</dbReference>
<dbReference type="InterPro" id="IPR013114">
    <property type="entry name" value="FabA_FabZ"/>
</dbReference>
<dbReference type="InterPro" id="IPR010084">
    <property type="entry name" value="FabZ"/>
</dbReference>
<dbReference type="InterPro" id="IPR029069">
    <property type="entry name" value="HotDog_dom_sf"/>
</dbReference>
<dbReference type="NCBIfam" id="TIGR01750">
    <property type="entry name" value="fabZ"/>
    <property type="match status" value="1"/>
</dbReference>
<dbReference type="NCBIfam" id="NF000582">
    <property type="entry name" value="PRK00006.1"/>
    <property type="match status" value="1"/>
</dbReference>
<dbReference type="PANTHER" id="PTHR30272">
    <property type="entry name" value="3-HYDROXYACYL-[ACYL-CARRIER-PROTEIN] DEHYDRATASE"/>
    <property type="match status" value="1"/>
</dbReference>
<dbReference type="PANTHER" id="PTHR30272:SF1">
    <property type="entry name" value="3-HYDROXYACYL-[ACYL-CARRIER-PROTEIN] DEHYDRATASE"/>
    <property type="match status" value="1"/>
</dbReference>
<dbReference type="Pfam" id="PF07977">
    <property type="entry name" value="FabA"/>
    <property type="match status" value="1"/>
</dbReference>
<dbReference type="SUPFAM" id="SSF54637">
    <property type="entry name" value="Thioesterase/thiol ester dehydrase-isomerase"/>
    <property type="match status" value="1"/>
</dbReference>
<sequence>MDVQLPIEAKDIQKLIPHRYPFLQLDRITAFEPMKTLTAIKNVSINEPQFQGHFPDLPVMPGVLIIEAMAQACGTLAILSEGGRKENEFFFFAGIDEARFKRQVIPGDQLVFEVELLTSRRGIGKFNAVAKVDGQVAVEAIIMCAKRVV</sequence>
<name>FABZ_NEIMF</name>
<organism>
    <name type="scientific">Neisseria meningitidis serogroup C / serotype 2a (strain ATCC 700532 / DSM 15464 / FAM18)</name>
    <dbReference type="NCBI Taxonomy" id="272831"/>
    <lineage>
        <taxon>Bacteria</taxon>
        <taxon>Pseudomonadati</taxon>
        <taxon>Pseudomonadota</taxon>
        <taxon>Betaproteobacteria</taxon>
        <taxon>Neisseriales</taxon>
        <taxon>Neisseriaceae</taxon>
        <taxon>Neisseria</taxon>
    </lineage>
</organism>
<reference key="1">
    <citation type="journal article" date="2007" name="PLoS Genet.">
        <title>Meningococcal genetic variation mechanisms viewed through comparative analysis of serogroup C strain FAM18.</title>
        <authorList>
            <person name="Bentley S.D."/>
            <person name="Vernikos G.S."/>
            <person name="Snyder L.A.S."/>
            <person name="Churcher C."/>
            <person name="Arrowsmith C."/>
            <person name="Chillingworth T."/>
            <person name="Cronin A."/>
            <person name="Davis P.H."/>
            <person name="Holroyd N.E."/>
            <person name="Jagels K."/>
            <person name="Maddison M."/>
            <person name="Moule S."/>
            <person name="Rabbinowitsch E."/>
            <person name="Sharp S."/>
            <person name="Unwin L."/>
            <person name="Whitehead S."/>
            <person name="Quail M.A."/>
            <person name="Achtman M."/>
            <person name="Barrell B.G."/>
            <person name="Saunders N.J."/>
            <person name="Parkhill J."/>
        </authorList>
    </citation>
    <scope>NUCLEOTIDE SEQUENCE [LARGE SCALE GENOMIC DNA]</scope>
    <source>
        <strain>ATCC 700532 / DSM 15464 / FAM18</strain>
    </source>
</reference>
<gene>
    <name evidence="1" type="primary">fabZ</name>
    <name type="ordered locus">NMC0170</name>
</gene>
<evidence type="ECO:0000255" key="1">
    <source>
        <dbReference type="HAMAP-Rule" id="MF_00406"/>
    </source>
</evidence>
<evidence type="ECO:0007829" key="2">
    <source>
        <dbReference type="PDB" id="4I83"/>
    </source>
</evidence>
<feature type="chain" id="PRO_0000301905" description="3-hydroxyacyl-[acyl-carrier-protein] dehydratase FabZ">
    <location>
        <begin position="1"/>
        <end position="149"/>
    </location>
</feature>
<feature type="active site" evidence="1">
    <location>
        <position position="53"/>
    </location>
</feature>
<feature type="strand" evidence="2">
    <location>
        <begin position="5"/>
        <end position="8"/>
    </location>
</feature>
<feature type="helix" evidence="2">
    <location>
        <begin position="9"/>
        <end position="15"/>
    </location>
</feature>
<feature type="strand" evidence="2">
    <location>
        <begin position="27"/>
        <end position="32"/>
    </location>
</feature>
<feature type="turn" evidence="2">
    <location>
        <begin position="33"/>
        <end position="35"/>
    </location>
</feature>
<feature type="strand" evidence="2">
    <location>
        <begin position="36"/>
        <end position="42"/>
    </location>
</feature>
<feature type="strand" evidence="2">
    <location>
        <begin position="45"/>
        <end position="47"/>
    </location>
</feature>
<feature type="helix" evidence="2">
    <location>
        <begin position="48"/>
        <end position="51"/>
    </location>
</feature>
<feature type="helix" evidence="2">
    <location>
        <begin position="62"/>
        <end position="80"/>
    </location>
</feature>
<feature type="turn" evidence="2">
    <location>
        <begin position="85"/>
        <end position="87"/>
    </location>
</feature>
<feature type="strand" evidence="2">
    <location>
        <begin position="91"/>
        <end position="95"/>
    </location>
</feature>
<feature type="strand" evidence="2">
    <location>
        <begin position="97"/>
        <end position="100"/>
    </location>
</feature>
<feature type="strand" evidence="2">
    <location>
        <begin position="109"/>
        <end position="120"/>
    </location>
</feature>
<feature type="strand" evidence="2">
    <location>
        <begin position="123"/>
        <end position="132"/>
    </location>
</feature>
<feature type="strand" evidence="2">
    <location>
        <begin position="135"/>
        <end position="145"/>
    </location>
</feature>
<protein>
    <recommendedName>
        <fullName evidence="1">3-hydroxyacyl-[acyl-carrier-protein] dehydratase FabZ</fullName>
        <ecNumber evidence="1">4.2.1.59</ecNumber>
    </recommendedName>
    <alternativeName>
        <fullName evidence="1">(3R)-hydroxymyristoyl-[acyl-carrier-protein] dehydratase</fullName>
        <shortName evidence="1">(3R)-hydroxymyristoyl-ACP dehydrase</shortName>
    </alternativeName>
    <alternativeName>
        <fullName evidence="1">Beta-hydroxyacyl-ACP dehydratase</fullName>
    </alternativeName>
</protein>